<evidence type="ECO:0000250" key="1"/>
<evidence type="ECO:0000255" key="2">
    <source>
        <dbReference type="PROSITE-ProRule" id="PRU01185"/>
    </source>
</evidence>
<evidence type="ECO:0000256" key="3">
    <source>
        <dbReference type="SAM" id="MobiDB-lite"/>
    </source>
</evidence>
<evidence type="ECO:0000269" key="4">
    <source>
    </source>
</evidence>
<evidence type="ECO:0000305" key="5"/>
<sequence>MSDFLAYLTSAPSRPHGSANITDKCYDHQLRDLIAYLKQPGVAPSTADINGYLEAISPAVHSLSYLYLLRIRIQQLQEKTAVGVPNDLQPGGTLWNQTVKFLRSFDPIQIRYVGHEWRELVDSVANAALSVSKPILAVKMIRDALERLNTAGVFTSLHLMLVKLALLSSSYTYVLPVLDKLLCHFPSDTQNAHAGILLCSEHEPSTVFFTDSSGFSANLTYRDHLQFYMYSGMVYMALKKWDQASHCLGIVISAPTANSVSKIMVEAYKKWVLANLLGHGKLFSVPNLVAPHVTRVYQSLSKPYISLAEAFEKRDFQRLRTEISLGQTIWRADKNSGLVYQVFEAYDKFLIIKLGKTFSALTMPDVLQRASSCSKGSRDIEEFVVSLVMTKELRAKLSHSPGNETTTMLRFPLSSQSHALREEHIRFRLIQKEAALNTISRAITQTKITLETSHENLQVIAKNQKLAGSSERSGVVGSTEADGGGDLDEDLMGDGR</sequence>
<feature type="chain" id="PRO_0000314742" description="COP9 signalosome complex subunit 3">
    <location>
        <begin position="1"/>
        <end position="496"/>
    </location>
</feature>
<feature type="domain" description="PCI" evidence="2">
    <location>
        <begin position="243"/>
        <end position="411"/>
    </location>
</feature>
<feature type="region of interest" description="Disordered" evidence="3">
    <location>
        <begin position="468"/>
        <end position="496"/>
    </location>
</feature>
<feature type="compositionally biased region" description="Acidic residues" evidence="3">
    <location>
        <begin position="483"/>
        <end position="496"/>
    </location>
</feature>
<gene>
    <name type="primary">csnC</name>
    <name type="synonym">csn3</name>
    <name type="ORF">AN5798</name>
</gene>
<proteinExistence type="evidence at protein level"/>
<organism>
    <name type="scientific">Emericella nidulans (strain FGSC A4 / ATCC 38163 / CBS 112.46 / NRRL 194 / M139)</name>
    <name type="common">Aspergillus nidulans</name>
    <dbReference type="NCBI Taxonomy" id="227321"/>
    <lineage>
        <taxon>Eukaryota</taxon>
        <taxon>Fungi</taxon>
        <taxon>Dikarya</taxon>
        <taxon>Ascomycota</taxon>
        <taxon>Pezizomycotina</taxon>
        <taxon>Eurotiomycetes</taxon>
        <taxon>Eurotiomycetidae</taxon>
        <taxon>Eurotiales</taxon>
        <taxon>Aspergillaceae</taxon>
        <taxon>Aspergillus</taxon>
        <taxon>Aspergillus subgen. Nidulantes</taxon>
    </lineage>
</organism>
<reference key="1">
    <citation type="journal article" date="2005" name="Nature">
        <title>Sequencing of Aspergillus nidulans and comparative analysis with A. fumigatus and A. oryzae.</title>
        <authorList>
            <person name="Galagan J.E."/>
            <person name="Calvo S.E."/>
            <person name="Cuomo C."/>
            <person name="Ma L.-J."/>
            <person name="Wortman J.R."/>
            <person name="Batzoglou S."/>
            <person name="Lee S.-I."/>
            <person name="Bastuerkmen M."/>
            <person name="Spevak C.C."/>
            <person name="Clutterbuck J."/>
            <person name="Kapitonov V."/>
            <person name="Jurka J."/>
            <person name="Scazzocchio C."/>
            <person name="Farman M.L."/>
            <person name="Butler J."/>
            <person name="Purcell S."/>
            <person name="Harris S."/>
            <person name="Braus G.H."/>
            <person name="Draht O."/>
            <person name="Busch S."/>
            <person name="D'Enfert C."/>
            <person name="Bouchier C."/>
            <person name="Goldman G.H."/>
            <person name="Bell-Pedersen D."/>
            <person name="Griffiths-Jones S."/>
            <person name="Doonan J.H."/>
            <person name="Yu J."/>
            <person name="Vienken K."/>
            <person name="Pain A."/>
            <person name="Freitag M."/>
            <person name="Selker E.U."/>
            <person name="Archer D.B."/>
            <person name="Penalva M.A."/>
            <person name="Oakley B.R."/>
            <person name="Momany M."/>
            <person name="Tanaka T."/>
            <person name="Kumagai T."/>
            <person name="Asai K."/>
            <person name="Machida M."/>
            <person name="Nierman W.C."/>
            <person name="Denning D.W."/>
            <person name="Caddick M.X."/>
            <person name="Hynes M."/>
            <person name="Paoletti M."/>
            <person name="Fischer R."/>
            <person name="Miller B.L."/>
            <person name="Dyer P.S."/>
            <person name="Sachs M.S."/>
            <person name="Osmani S.A."/>
            <person name="Birren B.W."/>
        </authorList>
    </citation>
    <scope>NUCLEOTIDE SEQUENCE [LARGE SCALE GENOMIC DNA]</scope>
    <source>
        <strain>FGSC A4 / ATCC 38163 / CBS 112.46 / NRRL 194 / M139</strain>
    </source>
</reference>
<reference key="2">
    <citation type="journal article" date="2009" name="Fungal Genet. Biol.">
        <title>The 2008 update of the Aspergillus nidulans genome annotation: a community effort.</title>
        <authorList>
            <person name="Wortman J.R."/>
            <person name="Gilsenan J.M."/>
            <person name="Joardar V."/>
            <person name="Deegan J."/>
            <person name="Clutterbuck J."/>
            <person name="Andersen M.R."/>
            <person name="Archer D."/>
            <person name="Bencina M."/>
            <person name="Braus G."/>
            <person name="Coutinho P."/>
            <person name="von Dohren H."/>
            <person name="Doonan J."/>
            <person name="Driessen A.J."/>
            <person name="Durek P."/>
            <person name="Espeso E."/>
            <person name="Fekete E."/>
            <person name="Flipphi M."/>
            <person name="Estrada C.G."/>
            <person name="Geysens S."/>
            <person name="Goldman G."/>
            <person name="de Groot P.W."/>
            <person name="Hansen K."/>
            <person name="Harris S.D."/>
            <person name="Heinekamp T."/>
            <person name="Helmstaedt K."/>
            <person name="Henrissat B."/>
            <person name="Hofmann G."/>
            <person name="Homan T."/>
            <person name="Horio T."/>
            <person name="Horiuchi H."/>
            <person name="James S."/>
            <person name="Jones M."/>
            <person name="Karaffa L."/>
            <person name="Karanyi Z."/>
            <person name="Kato M."/>
            <person name="Keller N."/>
            <person name="Kelly D.E."/>
            <person name="Kiel J.A."/>
            <person name="Kim J.M."/>
            <person name="van der Klei I.J."/>
            <person name="Klis F.M."/>
            <person name="Kovalchuk A."/>
            <person name="Krasevec N."/>
            <person name="Kubicek C.P."/>
            <person name="Liu B."/>
            <person name="Maccabe A."/>
            <person name="Meyer V."/>
            <person name="Mirabito P."/>
            <person name="Miskei M."/>
            <person name="Mos M."/>
            <person name="Mullins J."/>
            <person name="Nelson D.R."/>
            <person name="Nielsen J."/>
            <person name="Oakley B.R."/>
            <person name="Osmani S.A."/>
            <person name="Pakula T."/>
            <person name="Paszewski A."/>
            <person name="Paulsen I."/>
            <person name="Pilsyk S."/>
            <person name="Pocsi I."/>
            <person name="Punt P.J."/>
            <person name="Ram A.F."/>
            <person name="Ren Q."/>
            <person name="Robellet X."/>
            <person name="Robson G."/>
            <person name="Seiboth B."/>
            <person name="van Solingen P."/>
            <person name="Specht T."/>
            <person name="Sun J."/>
            <person name="Taheri-Talesh N."/>
            <person name="Takeshita N."/>
            <person name="Ussery D."/>
            <person name="vanKuyk P.A."/>
            <person name="Visser H."/>
            <person name="van de Vondervoort P.J."/>
            <person name="de Vries R.P."/>
            <person name="Walton J."/>
            <person name="Xiang X."/>
            <person name="Xiong Y."/>
            <person name="Zeng A.P."/>
            <person name="Brandt B.W."/>
            <person name="Cornell M.J."/>
            <person name="van den Hondel C.A."/>
            <person name="Visser J."/>
            <person name="Oliver S.G."/>
            <person name="Turner G."/>
        </authorList>
    </citation>
    <scope>GENOME REANNOTATION</scope>
    <source>
        <strain>FGSC A4 / ATCC 38163 / CBS 112.46 / NRRL 194 / M139</strain>
    </source>
</reference>
<reference key="3">
    <citation type="journal article" date="2007" name="Proc. Natl. Acad. Sci. U.S.A.">
        <title>An eight-subunit COP9 signalosome with an intact JAMM motif is required for fungal fruit body formation.</title>
        <authorList>
            <person name="Busch S."/>
            <person name="Schwier E.U."/>
            <person name="Nahlik K."/>
            <person name="Bayram O."/>
            <person name="Helmstaedt K."/>
            <person name="Draht O.W."/>
            <person name="Krappmann S."/>
            <person name="Valerius O."/>
            <person name="Lipscomb W.N."/>
            <person name="Braus G.H."/>
        </authorList>
    </citation>
    <scope>IDENTIFICATION IN THE CSN COMPLEX</scope>
    <scope>IDENTIFICATION BY MASS SPECTROMETRY</scope>
</reference>
<protein>
    <recommendedName>
        <fullName>COP9 signalosome complex subunit 3</fullName>
        <shortName>Signalosome subunit 3</shortName>
    </recommendedName>
</protein>
<comment type="function">
    <text evidence="1">Component of the COP9 signalosome (CSN) complex that acts as an regulator of the ubiquitin (Ubl) conjugation pathway by mediating the deneddylation of the cullin subunit of SCF-type E3 ubiquitin-protein ligase complexes (By similarity). The CSN complex seems to link protein degradation to sexual development.</text>
</comment>
<comment type="subunit">
    <text evidence="4">Component of the COP9 signalosome (CSN) complex.</text>
</comment>
<comment type="subcellular location">
    <subcellularLocation>
        <location evidence="1">Cytoplasm</location>
    </subcellularLocation>
    <subcellularLocation>
        <location evidence="1">Nucleus</location>
    </subcellularLocation>
</comment>
<comment type="similarity">
    <text evidence="5">Belongs to the CSN3 family.</text>
</comment>
<comment type="sequence caution" evidence="5">
    <conflict type="erroneous gene model prediction">
        <sequence resource="EMBL-CDS" id="EAA58307"/>
    </conflict>
</comment>
<keyword id="KW-0963">Cytoplasm</keyword>
<keyword id="KW-0539">Nucleus</keyword>
<keyword id="KW-1185">Reference proteome</keyword>
<keyword id="KW-0736">Signalosome</keyword>
<accession>Q5B0Y2</accession>
<accession>C8V0A7</accession>
<name>CSN3_EMENI</name>
<dbReference type="EMBL" id="AACD01000100">
    <property type="protein sequence ID" value="EAA58307.1"/>
    <property type="status" value="ALT_SEQ"/>
    <property type="molecule type" value="Genomic_DNA"/>
</dbReference>
<dbReference type="EMBL" id="BN001301">
    <property type="protein sequence ID" value="CBF70827.1"/>
    <property type="molecule type" value="Genomic_DNA"/>
</dbReference>
<dbReference type="RefSeq" id="XP_663402.1">
    <property type="nucleotide sequence ID" value="XM_658310.1"/>
</dbReference>
<dbReference type="SMR" id="Q5B0Y2"/>
<dbReference type="DIP" id="DIP-60927N"/>
<dbReference type="IntAct" id="Q5B0Y2">
    <property type="interactions" value="1"/>
</dbReference>
<dbReference type="STRING" id="227321.Q5B0Y2"/>
<dbReference type="EnsemblFungi" id="CBF70827">
    <property type="protein sequence ID" value="CBF70827"/>
    <property type="gene ID" value="ANIA_05798"/>
</dbReference>
<dbReference type="VEuPathDB" id="FungiDB:AN5798"/>
<dbReference type="eggNOG" id="KOG2582">
    <property type="taxonomic scope" value="Eukaryota"/>
</dbReference>
<dbReference type="HOGENOM" id="CLU_028825_1_1_1"/>
<dbReference type="InParanoid" id="Q5B0Y2"/>
<dbReference type="OMA" id="NHYHDLV"/>
<dbReference type="OrthoDB" id="29061at2759"/>
<dbReference type="Proteomes" id="UP000000560">
    <property type="component" value="Chromosome I"/>
</dbReference>
<dbReference type="GO" id="GO:0008180">
    <property type="term" value="C:COP9 signalosome"/>
    <property type="evidence" value="ECO:0000314"/>
    <property type="project" value="AspGD"/>
</dbReference>
<dbReference type="GO" id="GO:0005737">
    <property type="term" value="C:cytoplasm"/>
    <property type="evidence" value="ECO:0007669"/>
    <property type="project" value="UniProtKB-SubCell"/>
</dbReference>
<dbReference type="GO" id="GO:0070791">
    <property type="term" value="P:cleistothecium development"/>
    <property type="evidence" value="ECO:0000353"/>
    <property type="project" value="AspGD"/>
</dbReference>
<dbReference type="GO" id="GO:0006511">
    <property type="term" value="P:ubiquitin-dependent protein catabolic process"/>
    <property type="evidence" value="ECO:0000318"/>
    <property type="project" value="GO_Central"/>
</dbReference>
<dbReference type="InterPro" id="IPR055089">
    <property type="entry name" value="COP9_N"/>
</dbReference>
<dbReference type="InterPro" id="IPR050756">
    <property type="entry name" value="CSN3"/>
</dbReference>
<dbReference type="InterPro" id="IPR000717">
    <property type="entry name" value="PCI_dom"/>
</dbReference>
<dbReference type="PANTHER" id="PTHR10758">
    <property type="entry name" value="26S PROTEASOME NON-ATPASE REGULATORY SUBUNIT 3/COP9 SIGNALOSOME COMPLEX SUBUNIT 3"/>
    <property type="match status" value="1"/>
</dbReference>
<dbReference type="PANTHER" id="PTHR10758:SF1">
    <property type="entry name" value="COP9 SIGNALOSOME COMPLEX SUBUNIT 3"/>
    <property type="match status" value="1"/>
</dbReference>
<dbReference type="Pfam" id="PF22788">
    <property type="entry name" value="COP9_hel_rpt"/>
    <property type="match status" value="1"/>
</dbReference>
<dbReference type="PROSITE" id="PS50250">
    <property type="entry name" value="PCI"/>
    <property type="match status" value="1"/>
</dbReference>